<dbReference type="EMBL" id="DS027684">
    <property type="protein sequence ID" value="EAW25636.1"/>
    <property type="molecule type" value="Genomic_DNA"/>
</dbReference>
<dbReference type="RefSeq" id="XP_001267533.1">
    <property type="nucleotide sequence ID" value="XM_001267532.1"/>
</dbReference>
<dbReference type="SMR" id="A1CV59"/>
<dbReference type="STRING" id="331117.A1CV59"/>
<dbReference type="EnsemblFungi" id="EAW25636">
    <property type="protein sequence ID" value="EAW25636"/>
    <property type="gene ID" value="NFIA_044550"/>
</dbReference>
<dbReference type="GeneID" id="4594333"/>
<dbReference type="KEGG" id="nfi:NFIA_044550"/>
<dbReference type="VEuPathDB" id="FungiDB:NFIA_044550"/>
<dbReference type="eggNOG" id="ENOG502QS9H">
    <property type="taxonomic scope" value="Eukaryota"/>
</dbReference>
<dbReference type="HOGENOM" id="CLU_015164_1_0_1"/>
<dbReference type="OMA" id="AAETKYW"/>
<dbReference type="OrthoDB" id="5319830at2759"/>
<dbReference type="Proteomes" id="UP000006702">
    <property type="component" value="Unassembled WGS sequence"/>
</dbReference>
<dbReference type="GO" id="GO:0070847">
    <property type="term" value="C:core mediator complex"/>
    <property type="evidence" value="ECO:0007669"/>
    <property type="project" value="TreeGrafter"/>
</dbReference>
<dbReference type="GO" id="GO:0016592">
    <property type="term" value="C:mediator complex"/>
    <property type="evidence" value="ECO:0007669"/>
    <property type="project" value="InterPro"/>
</dbReference>
<dbReference type="GO" id="GO:0003712">
    <property type="term" value="F:transcription coregulator activity"/>
    <property type="evidence" value="ECO:0007669"/>
    <property type="project" value="InterPro"/>
</dbReference>
<dbReference type="GO" id="GO:0006357">
    <property type="term" value="P:regulation of transcription by RNA polymerase II"/>
    <property type="evidence" value="ECO:0007669"/>
    <property type="project" value="InterPro"/>
</dbReference>
<dbReference type="Gene3D" id="6.10.250.2620">
    <property type="match status" value="1"/>
</dbReference>
<dbReference type="InterPro" id="IPR019313">
    <property type="entry name" value="Mediator_Med17"/>
</dbReference>
<dbReference type="PANTHER" id="PTHR13114">
    <property type="entry name" value="MEDIATOR OF RNA POLYMERASE II TRANSCRIPTION SUBUNIT 17"/>
    <property type="match status" value="1"/>
</dbReference>
<dbReference type="PANTHER" id="PTHR13114:SF7">
    <property type="entry name" value="MEDIATOR OF RNA POLYMERASE II TRANSCRIPTION SUBUNIT 17"/>
    <property type="match status" value="1"/>
</dbReference>
<dbReference type="Pfam" id="PF10156">
    <property type="entry name" value="Med17"/>
    <property type="match status" value="1"/>
</dbReference>
<feature type="chain" id="PRO_0000304718" description="Mediator of RNA polymerase II transcription subunit 17">
    <location>
        <begin position="1"/>
        <end position="639"/>
    </location>
</feature>
<feature type="coiled-coil region" evidence="2">
    <location>
        <begin position="160"/>
        <end position="187"/>
    </location>
</feature>
<organism>
    <name type="scientific">Neosartorya fischeri (strain ATCC 1020 / DSM 3700 / CBS 544.65 / FGSC A1164 / JCM 1740 / NRRL 181 / WB 181)</name>
    <name type="common">Aspergillus fischerianus</name>
    <dbReference type="NCBI Taxonomy" id="331117"/>
    <lineage>
        <taxon>Eukaryota</taxon>
        <taxon>Fungi</taxon>
        <taxon>Dikarya</taxon>
        <taxon>Ascomycota</taxon>
        <taxon>Pezizomycotina</taxon>
        <taxon>Eurotiomycetes</taxon>
        <taxon>Eurotiomycetidae</taxon>
        <taxon>Eurotiales</taxon>
        <taxon>Aspergillaceae</taxon>
        <taxon>Aspergillus</taxon>
        <taxon>Aspergillus subgen. Fumigati</taxon>
    </lineage>
</organism>
<name>MED17_NEOFI</name>
<sequence length="639" mass="72201">MADDKFTLPLRPLIEKRDRPDPLPLEIAQINAQWGSFRDVSEESLRAKIEEEKSKEYTIEEEEGEGAGAELDTTERLDQLYKRRAEIIQFAMQAHMEAMFALDFISLLLSKHTPRQAETSMSAYLKQVAPLGSLNSEIISPPPKSEAVVRDTKTVSRGWRLQNFNAAADKLLKSASRLENEVASETRYWHEVLAVKDKGWKLCRLPRQGQTLGVQYGFLEATPIFRDRGLAALRRSQDGALILDKGLVPMKAKTVRVRVKDHGIITGCSKPYRSAAQDPDSIEGRILQARDTLFEEELFHELFREARIMGSQGVTTRQNMVQFPVSEEQDILLDLVDPYQEAYVDDEETKSEEHNVLADALAHSIRILLCYAHRQNLRRRTQPPPALSPRRRHIPEYQLLRPIMAYLQHSFHVRWLETFMKDVYGVLQSAGLSCSFTATPYSSVNLSNSDRSVPKVEGLIRQFLLPLETTFSADLLTPQSSFKVKTRTNLSVPPFGTHFEILLNLPHYPDVHSPHRIGLHDQAATIITHFIMLDIVAAIESQTSPASSISKTEAKSVSWEATYPHHGELLSVSIDGKQKKMKVILSRDELTVQTYDVQGVERYSRATPETTPGLQTHTWKAGPTTAPGLMEYVAAVSQR</sequence>
<comment type="function">
    <text evidence="1">Component of the Mediator complex, a coactivator involved in the regulated transcription of nearly all RNA polymerase II-dependent genes. Mediator functions as a bridge to convey information from gene-specific regulatory proteins to the basal RNA polymerase II transcription machinery. Mediator is recruited to promoters by direct interactions with regulatory proteins and serves as a scaffold for the assembly of a functional preinitiation complex with RNA polymerase II and the general transcription factors (By similarity).</text>
</comment>
<comment type="subunit">
    <text evidence="1">Component of the Mediator complex.</text>
</comment>
<comment type="subcellular location">
    <subcellularLocation>
        <location evidence="1">Nucleus</location>
    </subcellularLocation>
</comment>
<comment type="similarity">
    <text evidence="3">Belongs to the Mediator complex subunit 17 family.</text>
</comment>
<evidence type="ECO:0000250" key="1"/>
<evidence type="ECO:0000255" key="2"/>
<evidence type="ECO:0000305" key="3"/>
<keyword id="KW-0010">Activator</keyword>
<keyword id="KW-0175">Coiled coil</keyword>
<keyword id="KW-0539">Nucleus</keyword>
<keyword id="KW-1185">Reference proteome</keyword>
<keyword id="KW-0804">Transcription</keyword>
<keyword id="KW-0805">Transcription regulation</keyword>
<protein>
    <recommendedName>
        <fullName>Mediator of RNA polymerase II transcription subunit 17</fullName>
    </recommendedName>
    <alternativeName>
        <fullName>Mediator complex subunit 17</fullName>
    </alternativeName>
</protein>
<gene>
    <name type="primary">srb4</name>
    <name type="synonym">med17</name>
    <name type="ORF">NFIA_044550</name>
</gene>
<accession>A1CV59</accession>
<proteinExistence type="inferred from homology"/>
<reference key="1">
    <citation type="journal article" date="2008" name="PLoS Genet.">
        <title>Genomic islands in the pathogenic filamentous fungus Aspergillus fumigatus.</title>
        <authorList>
            <person name="Fedorova N.D."/>
            <person name="Khaldi N."/>
            <person name="Joardar V.S."/>
            <person name="Maiti R."/>
            <person name="Amedeo P."/>
            <person name="Anderson M.J."/>
            <person name="Crabtree J."/>
            <person name="Silva J.C."/>
            <person name="Badger J.H."/>
            <person name="Albarraq A."/>
            <person name="Angiuoli S."/>
            <person name="Bussey H."/>
            <person name="Bowyer P."/>
            <person name="Cotty P.J."/>
            <person name="Dyer P.S."/>
            <person name="Egan A."/>
            <person name="Galens K."/>
            <person name="Fraser-Liggett C.M."/>
            <person name="Haas B.J."/>
            <person name="Inman J.M."/>
            <person name="Kent R."/>
            <person name="Lemieux S."/>
            <person name="Malavazi I."/>
            <person name="Orvis J."/>
            <person name="Roemer T."/>
            <person name="Ronning C.M."/>
            <person name="Sundaram J.P."/>
            <person name="Sutton G."/>
            <person name="Turner G."/>
            <person name="Venter J.C."/>
            <person name="White O.R."/>
            <person name="Whitty B.R."/>
            <person name="Youngman P."/>
            <person name="Wolfe K.H."/>
            <person name="Goldman G.H."/>
            <person name="Wortman J.R."/>
            <person name="Jiang B."/>
            <person name="Denning D.W."/>
            <person name="Nierman W.C."/>
        </authorList>
    </citation>
    <scope>NUCLEOTIDE SEQUENCE [LARGE SCALE GENOMIC DNA]</scope>
    <source>
        <strain>ATCC 1020 / DSM 3700 / CBS 544.65 / FGSC A1164 / JCM 1740 / NRRL 181 / WB 181</strain>
    </source>
</reference>